<name>LACB1_STRP8</name>
<keyword id="KW-0413">Isomerase</keyword>
<keyword id="KW-0423">Lactose metabolism</keyword>
<comment type="catalytic activity">
    <reaction evidence="1">
        <text>aldehydo-D-galactose 6-phosphate = keto-D-tagatose 6-phosphate</text>
        <dbReference type="Rhea" id="RHEA:13033"/>
        <dbReference type="ChEBI" id="CHEBI:58255"/>
        <dbReference type="ChEBI" id="CHEBI:134283"/>
        <dbReference type="EC" id="5.3.1.26"/>
    </reaction>
</comment>
<comment type="pathway">
    <text evidence="1">Carbohydrate metabolism; D-galactose 6-phosphate degradation; D-tagatose 6-phosphate from D-galactose 6-phosphate: step 1/1.</text>
</comment>
<comment type="subunit">
    <text evidence="1">Heteromultimeric protein consisting of LacA and LacB.</text>
</comment>
<comment type="similarity">
    <text evidence="1">Belongs to the LacAB/RpiB family.</text>
</comment>
<sequence>MKIAIGCDHIVTNEKMAVSDFLKSKGYDVIDCGTYDHTRTHYPIFGKKVGEAVVNEQADLGVCICGTGVGINNAVNKVPGIRSALVRDMTTALYAKEELNANVIGFGGKITGELLMCDIIDAFIKAEYKETEENKKLIAKIAHLESHHASQEDPDFFTEFLERWDRGEYHD</sequence>
<dbReference type="EC" id="5.3.1.26" evidence="1"/>
<dbReference type="EMBL" id="AE009949">
    <property type="protein sequence ID" value="AAL98247.1"/>
    <property type="molecule type" value="Genomic_DNA"/>
</dbReference>
<dbReference type="SMR" id="Q8NZV7"/>
<dbReference type="KEGG" id="spm:spyM18_1716"/>
<dbReference type="HOGENOM" id="CLU_091396_2_0_9"/>
<dbReference type="UniPathway" id="UPA00702">
    <property type="reaction ID" value="UER00714"/>
</dbReference>
<dbReference type="GO" id="GO:0050044">
    <property type="term" value="F:galactose-6-phosphate isomerase activity"/>
    <property type="evidence" value="ECO:0007669"/>
    <property type="project" value="UniProtKB-UniRule"/>
</dbReference>
<dbReference type="GO" id="GO:0004751">
    <property type="term" value="F:ribose-5-phosphate isomerase activity"/>
    <property type="evidence" value="ECO:0007669"/>
    <property type="project" value="TreeGrafter"/>
</dbReference>
<dbReference type="GO" id="GO:0019316">
    <property type="term" value="P:D-allose catabolic process"/>
    <property type="evidence" value="ECO:0007669"/>
    <property type="project" value="TreeGrafter"/>
</dbReference>
<dbReference type="GO" id="GO:0019388">
    <property type="term" value="P:galactose catabolic process"/>
    <property type="evidence" value="ECO:0007669"/>
    <property type="project" value="UniProtKB-UniPathway"/>
</dbReference>
<dbReference type="GO" id="GO:0019512">
    <property type="term" value="P:lactose catabolic process via tagatose-6-phosphate"/>
    <property type="evidence" value="ECO:0007669"/>
    <property type="project" value="UniProtKB-UniRule"/>
</dbReference>
<dbReference type="GO" id="GO:0009052">
    <property type="term" value="P:pentose-phosphate shunt, non-oxidative branch"/>
    <property type="evidence" value="ECO:0007669"/>
    <property type="project" value="TreeGrafter"/>
</dbReference>
<dbReference type="Gene3D" id="3.40.1400.10">
    <property type="entry name" value="Sugar-phosphate isomerase, RpiB/LacA/LacB"/>
    <property type="match status" value="1"/>
</dbReference>
<dbReference type="HAMAP" id="MF_01556">
    <property type="entry name" value="LacB"/>
    <property type="match status" value="1"/>
</dbReference>
<dbReference type="InterPro" id="IPR004784">
    <property type="entry name" value="LacB"/>
</dbReference>
<dbReference type="InterPro" id="IPR003500">
    <property type="entry name" value="RpiB_LacA_LacB"/>
</dbReference>
<dbReference type="InterPro" id="IPR036569">
    <property type="entry name" value="RpiB_LacA_LacB_sf"/>
</dbReference>
<dbReference type="NCBIfam" id="TIGR01119">
    <property type="entry name" value="lacB"/>
    <property type="match status" value="1"/>
</dbReference>
<dbReference type="NCBIfam" id="NF004051">
    <property type="entry name" value="PRK05571.1"/>
    <property type="match status" value="1"/>
</dbReference>
<dbReference type="NCBIfam" id="NF006381">
    <property type="entry name" value="PRK08622.1"/>
    <property type="match status" value="1"/>
</dbReference>
<dbReference type="NCBIfam" id="NF009258">
    <property type="entry name" value="PRK12615.1"/>
    <property type="match status" value="1"/>
</dbReference>
<dbReference type="NCBIfam" id="TIGR00689">
    <property type="entry name" value="rpiB_lacA_lacB"/>
    <property type="match status" value="1"/>
</dbReference>
<dbReference type="PANTHER" id="PTHR30345:SF0">
    <property type="entry name" value="DNA DAMAGE-REPAIR_TOLERATION PROTEIN DRT102"/>
    <property type="match status" value="1"/>
</dbReference>
<dbReference type="PANTHER" id="PTHR30345">
    <property type="entry name" value="RIBOSE-5-PHOSPHATE ISOMERASE B"/>
    <property type="match status" value="1"/>
</dbReference>
<dbReference type="Pfam" id="PF02502">
    <property type="entry name" value="LacAB_rpiB"/>
    <property type="match status" value="1"/>
</dbReference>
<dbReference type="PIRSF" id="PIRSF005384">
    <property type="entry name" value="RpiB_LacA_B"/>
    <property type="match status" value="1"/>
</dbReference>
<dbReference type="SUPFAM" id="SSF89623">
    <property type="entry name" value="Ribose/Galactose isomerase RpiB/AlsB"/>
    <property type="match status" value="1"/>
</dbReference>
<proteinExistence type="inferred from homology"/>
<accession>Q8NZV7</accession>
<protein>
    <recommendedName>
        <fullName evidence="1">Galactose-6-phosphate isomerase subunit LacB 1</fullName>
        <ecNumber evidence="1">5.3.1.26</ecNumber>
    </recommendedName>
</protein>
<gene>
    <name evidence="1" type="primary">lacB1</name>
    <name type="ordered locus">spyM18_1716</name>
</gene>
<organism>
    <name type="scientific">Streptococcus pyogenes serotype M18 (strain MGAS8232)</name>
    <dbReference type="NCBI Taxonomy" id="186103"/>
    <lineage>
        <taxon>Bacteria</taxon>
        <taxon>Bacillati</taxon>
        <taxon>Bacillota</taxon>
        <taxon>Bacilli</taxon>
        <taxon>Lactobacillales</taxon>
        <taxon>Streptococcaceae</taxon>
        <taxon>Streptococcus</taxon>
    </lineage>
</organism>
<evidence type="ECO:0000255" key="1">
    <source>
        <dbReference type="HAMAP-Rule" id="MF_01556"/>
    </source>
</evidence>
<reference key="1">
    <citation type="journal article" date="2002" name="Proc. Natl. Acad. Sci. U.S.A.">
        <title>Genome sequence and comparative microarray analysis of serotype M18 group A Streptococcus strains associated with acute rheumatic fever outbreaks.</title>
        <authorList>
            <person name="Smoot J.C."/>
            <person name="Barbian K.D."/>
            <person name="Van Gompel J.J."/>
            <person name="Smoot L.M."/>
            <person name="Chaussee M.S."/>
            <person name="Sylva G.L."/>
            <person name="Sturdevant D.E."/>
            <person name="Ricklefs S.M."/>
            <person name="Porcella S.F."/>
            <person name="Parkins L.D."/>
            <person name="Beres S.B."/>
            <person name="Campbell D.S."/>
            <person name="Smith T.M."/>
            <person name="Zhang Q."/>
            <person name="Kapur V."/>
            <person name="Daly J.A."/>
            <person name="Veasy L.G."/>
            <person name="Musser J.M."/>
        </authorList>
    </citation>
    <scope>NUCLEOTIDE SEQUENCE [LARGE SCALE GENOMIC DNA]</scope>
    <source>
        <strain>MGAS8232</strain>
    </source>
</reference>
<feature type="chain" id="PRO_0000208155" description="Galactose-6-phosphate isomerase subunit LacB 1">
    <location>
        <begin position="1"/>
        <end position="171"/>
    </location>
</feature>